<sequence>MTTEHKSGFVAIVGRPNVGKSTLLNRIVGQKIAIMSDKAQTTRNKIQGIYTIPEAQIVFIDTPGIHKPKHRLGDFMVESAYNAMREVDATLFMVSADQKRGKGDDFIIERLKNNNSPVYLIINKIDKVHPDDLLSIIEDYSKQMDFKEIIPISATEGNNFEHLMDVLVEQMPEGPQYFPDDQITDHPEYFIVSELIREKVLLLTRDEIPHSVAVVVDSMKRDENDKVHVQATIIVERDSQKGIIIGKGGKMLKQIGTKARQDIEYLLDDKVYLELWVKVQKDWRDKKIYLQDFGYRKEEY</sequence>
<organism>
    <name type="scientific">Enterococcus faecalis (strain ATCC 700802 / V583)</name>
    <dbReference type="NCBI Taxonomy" id="226185"/>
    <lineage>
        <taxon>Bacteria</taxon>
        <taxon>Bacillati</taxon>
        <taxon>Bacillota</taxon>
        <taxon>Bacilli</taxon>
        <taxon>Lactobacillales</taxon>
        <taxon>Enterococcaceae</taxon>
        <taxon>Enterococcus</taxon>
    </lineage>
</organism>
<evidence type="ECO:0000255" key="1">
    <source>
        <dbReference type="HAMAP-Rule" id="MF_00367"/>
    </source>
</evidence>
<evidence type="ECO:0000255" key="2">
    <source>
        <dbReference type="PROSITE-ProRule" id="PRU01050"/>
    </source>
</evidence>
<accession>Q831T9</accession>
<dbReference type="EMBL" id="AE016830">
    <property type="protein sequence ID" value="AAO82129.1"/>
    <property type="molecule type" value="Genomic_DNA"/>
</dbReference>
<dbReference type="RefSeq" id="NP_816059.1">
    <property type="nucleotide sequence ID" value="NC_004668.1"/>
</dbReference>
<dbReference type="RefSeq" id="WP_002359745.1">
    <property type="nucleotide sequence ID" value="NZ_KE136528.1"/>
</dbReference>
<dbReference type="SMR" id="Q831T9"/>
<dbReference type="STRING" id="226185.EF_2410"/>
<dbReference type="EnsemblBacteria" id="AAO82129">
    <property type="protein sequence ID" value="AAO82129"/>
    <property type="gene ID" value="EF_2410"/>
</dbReference>
<dbReference type="GeneID" id="60894459"/>
<dbReference type="KEGG" id="efa:EF2410"/>
<dbReference type="PATRIC" id="fig|226185.45.peg.1134"/>
<dbReference type="eggNOG" id="COG1159">
    <property type="taxonomic scope" value="Bacteria"/>
</dbReference>
<dbReference type="HOGENOM" id="CLU_038009_1_0_9"/>
<dbReference type="Proteomes" id="UP000001415">
    <property type="component" value="Chromosome"/>
</dbReference>
<dbReference type="GO" id="GO:0005829">
    <property type="term" value="C:cytosol"/>
    <property type="evidence" value="ECO:0007669"/>
    <property type="project" value="TreeGrafter"/>
</dbReference>
<dbReference type="GO" id="GO:0005886">
    <property type="term" value="C:plasma membrane"/>
    <property type="evidence" value="ECO:0007669"/>
    <property type="project" value="UniProtKB-SubCell"/>
</dbReference>
<dbReference type="GO" id="GO:0005525">
    <property type="term" value="F:GTP binding"/>
    <property type="evidence" value="ECO:0007669"/>
    <property type="project" value="UniProtKB-UniRule"/>
</dbReference>
<dbReference type="GO" id="GO:0003924">
    <property type="term" value="F:GTPase activity"/>
    <property type="evidence" value="ECO:0007669"/>
    <property type="project" value="UniProtKB-UniRule"/>
</dbReference>
<dbReference type="GO" id="GO:0043024">
    <property type="term" value="F:ribosomal small subunit binding"/>
    <property type="evidence" value="ECO:0007669"/>
    <property type="project" value="TreeGrafter"/>
</dbReference>
<dbReference type="GO" id="GO:0070181">
    <property type="term" value="F:small ribosomal subunit rRNA binding"/>
    <property type="evidence" value="ECO:0007669"/>
    <property type="project" value="UniProtKB-UniRule"/>
</dbReference>
<dbReference type="GO" id="GO:0000028">
    <property type="term" value="P:ribosomal small subunit assembly"/>
    <property type="evidence" value="ECO:0007669"/>
    <property type="project" value="TreeGrafter"/>
</dbReference>
<dbReference type="CDD" id="cd04163">
    <property type="entry name" value="Era"/>
    <property type="match status" value="1"/>
</dbReference>
<dbReference type="CDD" id="cd22534">
    <property type="entry name" value="KH-II_Era"/>
    <property type="match status" value="1"/>
</dbReference>
<dbReference type="FunFam" id="3.30.300.20:FF:000003">
    <property type="entry name" value="GTPase Era"/>
    <property type="match status" value="1"/>
</dbReference>
<dbReference type="FunFam" id="3.40.50.300:FF:000094">
    <property type="entry name" value="GTPase Era"/>
    <property type="match status" value="1"/>
</dbReference>
<dbReference type="Gene3D" id="3.30.300.20">
    <property type="match status" value="1"/>
</dbReference>
<dbReference type="Gene3D" id="3.40.50.300">
    <property type="entry name" value="P-loop containing nucleotide triphosphate hydrolases"/>
    <property type="match status" value="1"/>
</dbReference>
<dbReference type="HAMAP" id="MF_00367">
    <property type="entry name" value="GTPase_Era"/>
    <property type="match status" value="1"/>
</dbReference>
<dbReference type="InterPro" id="IPR030388">
    <property type="entry name" value="G_ERA_dom"/>
</dbReference>
<dbReference type="InterPro" id="IPR006073">
    <property type="entry name" value="GTP-bd"/>
</dbReference>
<dbReference type="InterPro" id="IPR005662">
    <property type="entry name" value="GTPase_Era-like"/>
</dbReference>
<dbReference type="InterPro" id="IPR015946">
    <property type="entry name" value="KH_dom-like_a/b"/>
</dbReference>
<dbReference type="InterPro" id="IPR004044">
    <property type="entry name" value="KH_dom_type_2"/>
</dbReference>
<dbReference type="InterPro" id="IPR009019">
    <property type="entry name" value="KH_sf_prok-type"/>
</dbReference>
<dbReference type="InterPro" id="IPR027417">
    <property type="entry name" value="P-loop_NTPase"/>
</dbReference>
<dbReference type="InterPro" id="IPR005225">
    <property type="entry name" value="Small_GTP-bd"/>
</dbReference>
<dbReference type="NCBIfam" id="TIGR00436">
    <property type="entry name" value="era"/>
    <property type="match status" value="1"/>
</dbReference>
<dbReference type="NCBIfam" id="NF000908">
    <property type="entry name" value="PRK00089.1"/>
    <property type="match status" value="1"/>
</dbReference>
<dbReference type="NCBIfam" id="TIGR00231">
    <property type="entry name" value="small_GTP"/>
    <property type="match status" value="1"/>
</dbReference>
<dbReference type="PANTHER" id="PTHR42698">
    <property type="entry name" value="GTPASE ERA"/>
    <property type="match status" value="1"/>
</dbReference>
<dbReference type="PANTHER" id="PTHR42698:SF1">
    <property type="entry name" value="GTPASE ERA, MITOCHONDRIAL"/>
    <property type="match status" value="1"/>
</dbReference>
<dbReference type="Pfam" id="PF07650">
    <property type="entry name" value="KH_2"/>
    <property type="match status" value="1"/>
</dbReference>
<dbReference type="Pfam" id="PF01926">
    <property type="entry name" value="MMR_HSR1"/>
    <property type="match status" value="1"/>
</dbReference>
<dbReference type="SUPFAM" id="SSF52540">
    <property type="entry name" value="P-loop containing nucleoside triphosphate hydrolases"/>
    <property type="match status" value="1"/>
</dbReference>
<dbReference type="SUPFAM" id="SSF54814">
    <property type="entry name" value="Prokaryotic type KH domain (KH-domain type II)"/>
    <property type="match status" value="1"/>
</dbReference>
<dbReference type="PROSITE" id="PS51713">
    <property type="entry name" value="G_ERA"/>
    <property type="match status" value="1"/>
</dbReference>
<dbReference type="PROSITE" id="PS50823">
    <property type="entry name" value="KH_TYPE_2"/>
    <property type="match status" value="1"/>
</dbReference>
<gene>
    <name evidence="1" type="primary">era</name>
    <name type="ordered locus">EF_2410</name>
</gene>
<reference key="1">
    <citation type="journal article" date="2003" name="Science">
        <title>Role of mobile DNA in the evolution of vancomycin-resistant Enterococcus faecalis.</title>
        <authorList>
            <person name="Paulsen I.T."/>
            <person name="Banerjei L."/>
            <person name="Myers G.S.A."/>
            <person name="Nelson K.E."/>
            <person name="Seshadri R."/>
            <person name="Read T.D."/>
            <person name="Fouts D.E."/>
            <person name="Eisen J.A."/>
            <person name="Gill S.R."/>
            <person name="Heidelberg J.F."/>
            <person name="Tettelin H."/>
            <person name="Dodson R.J."/>
            <person name="Umayam L.A."/>
            <person name="Brinkac L.M."/>
            <person name="Beanan M.J."/>
            <person name="Daugherty S.C."/>
            <person name="DeBoy R.T."/>
            <person name="Durkin S.A."/>
            <person name="Kolonay J.F."/>
            <person name="Madupu R."/>
            <person name="Nelson W.C."/>
            <person name="Vamathevan J.J."/>
            <person name="Tran B."/>
            <person name="Upton J."/>
            <person name="Hansen T."/>
            <person name="Shetty J."/>
            <person name="Khouri H.M."/>
            <person name="Utterback T.R."/>
            <person name="Radune D."/>
            <person name="Ketchum K.A."/>
            <person name="Dougherty B.A."/>
            <person name="Fraser C.M."/>
        </authorList>
    </citation>
    <scope>NUCLEOTIDE SEQUENCE [LARGE SCALE GENOMIC DNA]</scope>
    <source>
        <strain>ATCC 700802 / V583</strain>
    </source>
</reference>
<name>ERA_ENTFA</name>
<feature type="chain" id="PRO_1000121327" description="GTPase Era">
    <location>
        <begin position="1"/>
        <end position="300"/>
    </location>
</feature>
<feature type="domain" description="Era-type G" evidence="2">
    <location>
        <begin position="6"/>
        <end position="173"/>
    </location>
</feature>
<feature type="domain" description="KH type-2" evidence="1">
    <location>
        <begin position="204"/>
        <end position="281"/>
    </location>
</feature>
<feature type="region of interest" description="G1" evidence="2">
    <location>
        <begin position="14"/>
        <end position="21"/>
    </location>
</feature>
<feature type="region of interest" description="G2" evidence="2">
    <location>
        <begin position="40"/>
        <end position="44"/>
    </location>
</feature>
<feature type="region of interest" description="G3" evidence="2">
    <location>
        <begin position="61"/>
        <end position="64"/>
    </location>
</feature>
<feature type="region of interest" description="G4" evidence="2">
    <location>
        <begin position="123"/>
        <end position="126"/>
    </location>
</feature>
<feature type="region of interest" description="G5" evidence="2">
    <location>
        <begin position="152"/>
        <end position="154"/>
    </location>
</feature>
<feature type="binding site" evidence="1">
    <location>
        <begin position="14"/>
        <end position="21"/>
    </location>
    <ligand>
        <name>GTP</name>
        <dbReference type="ChEBI" id="CHEBI:37565"/>
    </ligand>
</feature>
<feature type="binding site" evidence="1">
    <location>
        <begin position="61"/>
        <end position="65"/>
    </location>
    <ligand>
        <name>GTP</name>
        <dbReference type="ChEBI" id="CHEBI:37565"/>
    </ligand>
</feature>
<feature type="binding site" evidence="1">
    <location>
        <begin position="123"/>
        <end position="126"/>
    </location>
    <ligand>
        <name>GTP</name>
        <dbReference type="ChEBI" id="CHEBI:37565"/>
    </ligand>
</feature>
<proteinExistence type="inferred from homology"/>
<comment type="function">
    <text evidence="1">An essential GTPase that binds both GDP and GTP, with rapid nucleotide exchange. Plays a role in 16S rRNA processing and 30S ribosomal subunit biogenesis and possibly also in cell cycle regulation and energy metabolism.</text>
</comment>
<comment type="subunit">
    <text evidence="1">Monomer.</text>
</comment>
<comment type="subcellular location">
    <subcellularLocation>
        <location>Cytoplasm</location>
    </subcellularLocation>
    <subcellularLocation>
        <location evidence="1">Cell membrane</location>
        <topology evidence="1">Peripheral membrane protein</topology>
    </subcellularLocation>
</comment>
<comment type="similarity">
    <text evidence="1 2">Belongs to the TRAFAC class TrmE-Era-EngA-EngB-Septin-like GTPase superfamily. Era GTPase family.</text>
</comment>
<protein>
    <recommendedName>
        <fullName evidence="1">GTPase Era</fullName>
    </recommendedName>
</protein>
<keyword id="KW-1003">Cell membrane</keyword>
<keyword id="KW-0963">Cytoplasm</keyword>
<keyword id="KW-0342">GTP-binding</keyword>
<keyword id="KW-0472">Membrane</keyword>
<keyword id="KW-0547">Nucleotide-binding</keyword>
<keyword id="KW-1185">Reference proteome</keyword>
<keyword id="KW-0690">Ribosome biogenesis</keyword>
<keyword id="KW-0694">RNA-binding</keyword>
<keyword id="KW-0699">rRNA-binding</keyword>